<feature type="chain" id="PRO_0000238025" description="Large-conductance mechanosensitive channel 2">
    <location>
        <begin position="1"/>
        <end position="140"/>
    </location>
</feature>
<feature type="transmembrane region" description="Helical" evidence="1">
    <location>
        <begin position="8"/>
        <end position="28"/>
    </location>
</feature>
<feature type="transmembrane region" description="Helical" evidence="1">
    <location>
        <begin position="30"/>
        <end position="50"/>
    </location>
</feature>
<feature type="transmembrane region" description="Helical" evidence="1">
    <location>
        <begin position="81"/>
        <end position="101"/>
    </location>
</feature>
<name>MSCL2_RHILO</name>
<evidence type="ECO:0000255" key="1">
    <source>
        <dbReference type="HAMAP-Rule" id="MF_00115"/>
    </source>
</evidence>
<reference key="1">
    <citation type="journal article" date="2000" name="DNA Res.">
        <title>Complete genome structure of the nitrogen-fixing symbiotic bacterium Mesorhizobium loti.</title>
        <authorList>
            <person name="Kaneko T."/>
            <person name="Nakamura Y."/>
            <person name="Sato S."/>
            <person name="Asamizu E."/>
            <person name="Kato T."/>
            <person name="Sasamoto S."/>
            <person name="Watanabe A."/>
            <person name="Idesawa K."/>
            <person name="Ishikawa A."/>
            <person name="Kawashima K."/>
            <person name="Kimura T."/>
            <person name="Kishida Y."/>
            <person name="Kiyokawa C."/>
            <person name="Kohara M."/>
            <person name="Matsumoto M."/>
            <person name="Matsuno A."/>
            <person name="Mochizuki Y."/>
            <person name="Nakayama S."/>
            <person name="Nakazaki N."/>
            <person name="Shimpo S."/>
            <person name="Sugimoto M."/>
            <person name="Takeuchi C."/>
            <person name="Yamada M."/>
            <person name="Tabata S."/>
        </authorList>
    </citation>
    <scope>NUCLEOTIDE SEQUENCE [LARGE SCALE GENOMIC DNA]</scope>
    <source>
        <strain>LMG 29417 / CECT 9101 / MAFF 303099</strain>
    </source>
</reference>
<organism>
    <name type="scientific">Mesorhizobium japonicum (strain LMG 29417 / CECT 9101 / MAFF 303099)</name>
    <name type="common">Mesorhizobium loti (strain MAFF 303099)</name>
    <dbReference type="NCBI Taxonomy" id="266835"/>
    <lineage>
        <taxon>Bacteria</taxon>
        <taxon>Pseudomonadati</taxon>
        <taxon>Pseudomonadota</taxon>
        <taxon>Alphaproteobacteria</taxon>
        <taxon>Hyphomicrobiales</taxon>
        <taxon>Phyllobacteriaceae</taxon>
        <taxon>Mesorhizobium</taxon>
    </lineage>
</organism>
<protein>
    <recommendedName>
        <fullName evidence="1">Large-conductance mechanosensitive channel 2</fullName>
    </recommendedName>
</protein>
<proteinExistence type="inferred from homology"/>
<comment type="function">
    <text evidence="1">Channel that opens in response to stretch forces in the membrane lipid bilayer. May participate in the regulation of osmotic pressure changes within the cell.</text>
</comment>
<comment type="subunit">
    <text evidence="1">Homopentamer.</text>
</comment>
<comment type="subcellular location">
    <subcellularLocation>
        <location evidence="1">Cell inner membrane</location>
        <topology evidence="1">Multi-pass membrane protein</topology>
    </subcellularLocation>
</comment>
<comment type="similarity">
    <text evidence="1">Belongs to the MscL family.</text>
</comment>
<sequence>MLKEFQEFISKGNVMDLAVGVIIGAAFGKIVDSLVNDIIMPVIGAIFGGLDFNNYFVGLSSAVNATSLADAKKQGAVFAYGSFITVALNFVILAFIIFLMVKAVNNLRRRLEREKPATPAAPPPADVALLTEIRDLLARR</sequence>
<keyword id="KW-0997">Cell inner membrane</keyword>
<keyword id="KW-1003">Cell membrane</keyword>
<keyword id="KW-0407">Ion channel</keyword>
<keyword id="KW-0406">Ion transport</keyword>
<keyword id="KW-0472">Membrane</keyword>
<keyword id="KW-0812">Transmembrane</keyword>
<keyword id="KW-1133">Transmembrane helix</keyword>
<keyword id="KW-0813">Transport</keyword>
<dbReference type="EMBL" id="BA000012">
    <property type="protein sequence ID" value="BAB51306.1"/>
    <property type="molecule type" value="Genomic_DNA"/>
</dbReference>
<dbReference type="RefSeq" id="WP_010912648.1">
    <property type="nucleotide sequence ID" value="NC_002678.2"/>
</dbReference>
<dbReference type="SMR" id="Q98DG5"/>
<dbReference type="KEGG" id="mlo:mlr4713"/>
<dbReference type="PATRIC" id="fig|266835.9.peg.3722"/>
<dbReference type="eggNOG" id="COG1970">
    <property type="taxonomic scope" value="Bacteria"/>
</dbReference>
<dbReference type="HOGENOM" id="CLU_095787_0_1_5"/>
<dbReference type="Proteomes" id="UP000000552">
    <property type="component" value="Chromosome"/>
</dbReference>
<dbReference type="GO" id="GO:0005886">
    <property type="term" value="C:plasma membrane"/>
    <property type="evidence" value="ECO:0007669"/>
    <property type="project" value="UniProtKB-SubCell"/>
</dbReference>
<dbReference type="GO" id="GO:0008381">
    <property type="term" value="F:mechanosensitive monoatomic ion channel activity"/>
    <property type="evidence" value="ECO:0007669"/>
    <property type="project" value="UniProtKB-UniRule"/>
</dbReference>
<dbReference type="Gene3D" id="1.10.1200.120">
    <property type="entry name" value="Large-conductance mechanosensitive channel, MscL, domain 1"/>
    <property type="match status" value="1"/>
</dbReference>
<dbReference type="HAMAP" id="MF_00115">
    <property type="entry name" value="MscL"/>
    <property type="match status" value="1"/>
</dbReference>
<dbReference type="InterPro" id="IPR019823">
    <property type="entry name" value="Mechanosensitive_channel_CS"/>
</dbReference>
<dbReference type="InterPro" id="IPR001185">
    <property type="entry name" value="MS_channel"/>
</dbReference>
<dbReference type="InterPro" id="IPR037673">
    <property type="entry name" value="MSC/AndL"/>
</dbReference>
<dbReference type="InterPro" id="IPR036019">
    <property type="entry name" value="MscL_channel"/>
</dbReference>
<dbReference type="NCBIfam" id="TIGR00220">
    <property type="entry name" value="mscL"/>
    <property type="match status" value="1"/>
</dbReference>
<dbReference type="NCBIfam" id="NF001843">
    <property type="entry name" value="PRK00567.1-4"/>
    <property type="match status" value="1"/>
</dbReference>
<dbReference type="NCBIfam" id="NF010557">
    <property type="entry name" value="PRK13952.1"/>
    <property type="match status" value="1"/>
</dbReference>
<dbReference type="PANTHER" id="PTHR30266:SF2">
    <property type="entry name" value="LARGE-CONDUCTANCE MECHANOSENSITIVE CHANNEL"/>
    <property type="match status" value="1"/>
</dbReference>
<dbReference type="PANTHER" id="PTHR30266">
    <property type="entry name" value="MECHANOSENSITIVE CHANNEL MSCL"/>
    <property type="match status" value="1"/>
</dbReference>
<dbReference type="Pfam" id="PF01741">
    <property type="entry name" value="MscL"/>
    <property type="match status" value="1"/>
</dbReference>
<dbReference type="PRINTS" id="PR01264">
    <property type="entry name" value="MECHCHANNEL"/>
</dbReference>
<dbReference type="SUPFAM" id="SSF81330">
    <property type="entry name" value="Gated mechanosensitive channel"/>
    <property type="match status" value="1"/>
</dbReference>
<dbReference type="PROSITE" id="PS01327">
    <property type="entry name" value="MSCL"/>
    <property type="match status" value="1"/>
</dbReference>
<accession>Q98DG5</accession>
<gene>
    <name evidence="1" type="primary">mscL2</name>
    <name type="ordered locus">mlr4713</name>
</gene>